<protein>
    <recommendedName>
        <fullName>Peptidyl-prolyl cis-trans isomerase B</fullName>
        <shortName>PPIase B</shortName>
        <ecNumber>5.2.1.8</ecNumber>
    </recommendedName>
    <alternativeName>
        <fullName>Cyclophilin B</fullName>
    </alternativeName>
    <alternativeName>
        <fullName>Rotamase B</fullName>
    </alternativeName>
</protein>
<accession>Q01490</accession>
<evidence type="ECO:0000250" key="1"/>
<evidence type="ECO:0000255" key="2"/>
<evidence type="ECO:0000255" key="3">
    <source>
        <dbReference type="PROSITE-ProRule" id="PRU00156"/>
    </source>
</evidence>
<evidence type="ECO:0000269" key="4">
    <source>
    </source>
</evidence>
<evidence type="ECO:0000305" key="5"/>
<keyword id="KW-0903">Direct protein sequencing</keyword>
<keyword id="KW-0256">Endoplasmic reticulum</keyword>
<keyword id="KW-0413">Isomerase</keyword>
<keyword id="KW-0697">Rotamase</keyword>
<keyword id="KW-0732">Signal</keyword>
<gene>
    <name type="primary">CYPB</name>
</gene>
<comment type="function">
    <text>PPIases accelerate the folding of proteins. It catalyzes the cis-trans isomerization of proline imidic peptide bonds in oligopeptides.</text>
</comment>
<comment type="catalytic activity">
    <reaction>
        <text>[protein]-peptidylproline (omega=180) = [protein]-peptidylproline (omega=0)</text>
        <dbReference type="Rhea" id="RHEA:16237"/>
        <dbReference type="Rhea" id="RHEA-COMP:10747"/>
        <dbReference type="Rhea" id="RHEA-COMP:10748"/>
        <dbReference type="ChEBI" id="CHEBI:83833"/>
        <dbReference type="ChEBI" id="CHEBI:83834"/>
        <dbReference type="EC" id="5.2.1.8"/>
    </reaction>
</comment>
<comment type="activity regulation">
    <text>Inhibited by cyclosporin A (CsA).</text>
</comment>
<comment type="subcellular location">
    <subcellularLocation>
        <location evidence="1">Endoplasmic reticulum lumen</location>
    </subcellularLocation>
</comment>
<comment type="similarity">
    <text evidence="5">Belongs to the cyclophilin-type PPIase family. PPIase B subfamily.</text>
</comment>
<proteinExistence type="evidence at protein level"/>
<dbReference type="EC" id="5.2.1.8"/>
<dbReference type="EMBL" id="U17900">
    <property type="protein sequence ID" value="AAD04195.1"/>
    <property type="molecule type" value="mRNA"/>
</dbReference>
<dbReference type="SMR" id="Q01490"/>
<dbReference type="GO" id="GO:0005788">
    <property type="term" value="C:endoplasmic reticulum lumen"/>
    <property type="evidence" value="ECO:0007669"/>
    <property type="project" value="UniProtKB-SubCell"/>
</dbReference>
<dbReference type="GO" id="GO:0000324">
    <property type="term" value="C:fungal-type vacuole"/>
    <property type="evidence" value="ECO:0007669"/>
    <property type="project" value="TreeGrafter"/>
</dbReference>
<dbReference type="GO" id="GO:0016018">
    <property type="term" value="F:cyclosporin A binding"/>
    <property type="evidence" value="ECO:0007669"/>
    <property type="project" value="TreeGrafter"/>
</dbReference>
<dbReference type="GO" id="GO:0003755">
    <property type="term" value="F:peptidyl-prolyl cis-trans isomerase activity"/>
    <property type="evidence" value="ECO:0007669"/>
    <property type="project" value="UniProtKB-KW"/>
</dbReference>
<dbReference type="GO" id="GO:0006457">
    <property type="term" value="P:protein folding"/>
    <property type="evidence" value="ECO:0007669"/>
    <property type="project" value="InterPro"/>
</dbReference>
<dbReference type="CDD" id="cd01926">
    <property type="entry name" value="cyclophilin_ABH_like"/>
    <property type="match status" value="1"/>
</dbReference>
<dbReference type="FunFam" id="2.40.100.10:FF:000001">
    <property type="entry name" value="Peptidyl-prolyl cis-trans isomerase"/>
    <property type="match status" value="1"/>
</dbReference>
<dbReference type="Gene3D" id="2.40.100.10">
    <property type="entry name" value="Cyclophilin-like"/>
    <property type="match status" value="1"/>
</dbReference>
<dbReference type="InterPro" id="IPR029000">
    <property type="entry name" value="Cyclophilin-like_dom_sf"/>
</dbReference>
<dbReference type="InterPro" id="IPR024936">
    <property type="entry name" value="Cyclophilin-type_PPIase"/>
</dbReference>
<dbReference type="InterPro" id="IPR020892">
    <property type="entry name" value="Cyclophilin-type_PPIase_CS"/>
</dbReference>
<dbReference type="InterPro" id="IPR002130">
    <property type="entry name" value="Cyclophilin-type_PPIase_dom"/>
</dbReference>
<dbReference type="PANTHER" id="PTHR11071">
    <property type="entry name" value="PEPTIDYL-PROLYL CIS-TRANS ISOMERASE"/>
    <property type="match status" value="1"/>
</dbReference>
<dbReference type="PANTHER" id="PTHR11071:SF561">
    <property type="entry name" value="PEPTIDYL-PROLYL CIS-TRANS ISOMERASE D-RELATED"/>
    <property type="match status" value="1"/>
</dbReference>
<dbReference type="Pfam" id="PF00160">
    <property type="entry name" value="Pro_isomerase"/>
    <property type="match status" value="1"/>
</dbReference>
<dbReference type="PIRSF" id="PIRSF001467">
    <property type="entry name" value="Peptidylpro_ismrse"/>
    <property type="match status" value="1"/>
</dbReference>
<dbReference type="PRINTS" id="PR00153">
    <property type="entry name" value="CSAPPISMRASE"/>
</dbReference>
<dbReference type="SUPFAM" id="SSF50891">
    <property type="entry name" value="Cyclophilin-like"/>
    <property type="match status" value="1"/>
</dbReference>
<dbReference type="PROSITE" id="PS00170">
    <property type="entry name" value="CSA_PPIASE_1"/>
    <property type="match status" value="1"/>
</dbReference>
<dbReference type="PROSITE" id="PS50072">
    <property type="entry name" value="CSA_PPIASE_2"/>
    <property type="match status" value="1"/>
</dbReference>
<feature type="signal peptide" evidence="4">
    <location>
        <begin position="1"/>
        <end position="22"/>
    </location>
</feature>
<feature type="chain" id="PRO_0000025485" description="Peptidyl-prolyl cis-trans isomerase B">
    <location>
        <begin position="23"/>
        <end position="203"/>
    </location>
</feature>
<feature type="domain" description="PPIase cyclophilin-type" evidence="3">
    <location>
        <begin position="33"/>
        <end position="190"/>
    </location>
</feature>
<feature type="short sequence motif" description="Prevents secretion from ER" evidence="1">
    <location>
        <begin position="200"/>
        <end position="203"/>
    </location>
</feature>
<feature type="binding site" evidence="2">
    <location>
        <position position="147"/>
    </location>
    <ligand>
        <name>cyclosporin A</name>
        <dbReference type="ChEBI" id="CHEBI:4031"/>
    </ligand>
</feature>
<sequence>MNFSIKSVIFLAIVALATLVSASTNPKVTNKVYFDIKQGDKDLGRIVLGLYGEVVPKTVENFRALATGEKGYGYKNSKFHRVIKDFMIQGGDFTRGDGTGGKSIYGERFADENFKLRHTGPGILSMANAGRDTNGSQFFITTVTTSWLDGRHVVFGKVIEGMDVVTAIETTKTLPGDRPATPVIIADCGELPVSNNNDAKAEL</sequence>
<reference key="1">
    <citation type="journal article" date="1995" name="Proc. Natl. Acad. Sci. U.S.A.">
        <title>A cyclophilin from the polycentric anaerobic rumen fungus Orpinomyces sp. strain PC-2 is highly homologous to vertebrate cyclophilin B.</title>
        <authorList>
            <person name="Chen H."/>
            <person name="Li X.-L."/>
            <person name="Ljungdahl L.G."/>
        </authorList>
    </citation>
    <scope>NUCLEOTIDE SEQUENCE [MRNA]</scope>
    <scope>PROTEIN SEQUENCE OF 23-52</scope>
</reference>
<name>PPIB_ORPSP</name>
<organism>
    <name type="scientific">Orpinomyces sp. (strain PC-2)</name>
    <dbReference type="NCBI Taxonomy" id="50059"/>
    <lineage>
        <taxon>Eukaryota</taxon>
        <taxon>Fungi</taxon>
        <taxon>Fungi incertae sedis</taxon>
        <taxon>Chytridiomycota</taxon>
        <taxon>Chytridiomycota incertae sedis</taxon>
        <taxon>Neocallimastigomycetes</taxon>
        <taxon>Neocallimastigales</taxon>
        <taxon>Neocallimastigaceae</taxon>
        <taxon>Orpinomyces</taxon>
    </lineage>
</organism>